<dbReference type="EMBL" id="CP000611">
    <property type="protein sequence ID" value="ABQ73172.1"/>
    <property type="molecule type" value="Genomic_DNA"/>
</dbReference>
<dbReference type="RefSeq" id="WP_003407347.1">
    <property type="nucleotide sequence ID" value="NZ_CP016972.1"/>
</dbReference>
<dbReference type="SMR" id="A5U2C2"/>
<dbReference type="GeneID" id="45425398"/>
<dbReference type="KEGG" id="mra:MRA_1429"/>
<dbReference type="eggNOG" id="COG0322">
    <property type="taxonomic scope" value="Bacteria"/>
</dbReference>
<dbReference type="HOGENOM" id="CLU_014841_1_1_11"/>
<dbReference type="Proteomes" id="UP000001988">
    <property type="component" value="Chromosome"/>
</dbReference>
<dbReference type="GO" id="GO:0005737">
    <property type="term" value="C:cytoplasm"/>
    <property type="evidence" value="ECO:0007669"/>
    <property type="project" value="UniProtKB-SubCell"/>
</dbReference>
<dbReference type="GO" id="GO:0009380">
    <property type="term" value="C:excinuclease repair complex"/>
    <property type="evidence" value="ECO:0007669"/>
    <property type="project" value="InterPro"/>
</dbReference>
<dbReference type="GO" id="GO:0003677">
    <property type="term" value="F:DNA binding"/>
    <property type="evidence" value="ECO:0007669"/>
    <property type="project" value="UniProtKB-UniRule"/>
</dbReference>
<dbReference type="GO" id="GO:0009381">
    <property type="term" value="F:excinuclease ABC activity"/>
    <property type="evidence" value="ECO:0007669"/>
    <property type="project" value="UniProtKB-UniRule"/>
</dbReference>
<dbReference type="GO" id="GO:0006289">
    <property type="term" value="P:nucleotide-excision repair"/>
    <property type="evidence" value="ECO:0007669"/>
    <property type="project" value="UniProtKB-UniRule"/>
</dbReference>
<dbReference type="GO" id="GO:0009432">
    <property type="term" value="P:SOS response"/>
    <property type="evidence" value="ECO:0007669"/>
    <property type="project" value="UniProtKB-UniRule"/>
</dbReference>
<dbReference type="CDD" id="cd10434">
    <property type="entry name" value="GIY-YIG_UvrC_Cho"/>
    <property type="match status" value="1"/>
</dbReference>
<dbReference type="FunFam" id="1.10.150.20:FF:000005">
    <property type="entry name" value="UvrABC system protein C"/>
    <property type="match status" value="1"/>
</dbReference>
<dbReference type="FunFam" id="3.30.420.340:FF:000003">
    <property type="entry name" value="UvrABC system protein C"/>
    <property type="match status" value="1"/>
</dbReference>
<dbReference type="FunFam" id="3.40.1440.10:FF:000001">
    <property type="entry name" value="UvrABC system protein C"/>
    <property type="match status" value="1"/>
</dbReference>
<dbReference type="Gene3D" id="1.10.150.20">
    <property type="entry name" value="5' to 3' exonuclease, C-terminal subdomain"/>
    <property type="match status" value="1"/>
</dbReference>
<dbReference type="Gene3D" id="3.40.1440.10">
    <property type="entry name" value="GIY-YIG endonuclease"/>
    <property type="match status" value="1"/>
</dbReference>
<dbReference type="Gene3D" id="4.10.860.10">
    <property type="entry name" value="UVR domain"/>
    <property type="match status" value="1"/>
</dbReference>
<dbReference type="Gene3D" id="3.30.420.340">
    <property type="entry name" value="UvrC, RNAse H endonuclease domain"/>
    <property type="match status" value="1"/>
</dbReference>
<dbReference type="HAMAP" id="MF_00203">
    <property type="entry name" value="UvrC"/>
    <property type="match status" value="1"/>
</dbReference>
<dbReference type="InterPro" id="IPR000305">
    <property type="entry name" value="GIY-YIG_endonuc"/>
</dbReference>
<dbReference type="InterPro" id="IPR035901">
    <property type="entry name" value="GIY-YIG_endonuc_sf"/>
</dbReference>
<dbReference type="InterPro" id="IPR047296">
    <property type="entry name" value="GIY-YIG_UvrC_Cho"/>
</dbReference>
<dbReference type="InterPro" id="IPR003583">
    <property type="entry name" value="Hlx-hairpin-Hlx_DNA-bd_motif"/>
</dbReference>
<dbReference type="InterPro" id="IPR010994">
    <property type="entry name" value="RuvA_2-like"/>
</dbReference>
<dbReference type="InterPro" id="IPR001943">
    <property type="entry name" value="UVR_dom"/>
</dbReference>
<dbReference type="InterPro" id="IPR036876">
    <property type="entry name" value="UVR_dom_sf"/>
</dbReference>
<dbReference type="InterPro" id="IPR050066">
    <property type="entry name" value="UvrABC_protein_C"/>
</dbReference>
<dbReference type="InterPro" id="IPR004791">
    <property type="entry name" value="UvrC"/>
</dbReference>
<dbReference type="InterPro" id="IPR001162">
    <property type="entry name" value="UvrC_RNase_H_dom"/>
</dbReference>
<dbReference type="InterPro" id="IPR038476">
    <property type="entry name" value="UvrC_RNase_H_dom_sf"/>
</dbReference>
<dbReference type="NCBIfam" id="NF001824">
    <property type="entry name" value="PRK00558.1-5"/>
    <property type="match status" value="1"/>
</dbReference>
<dbReference type="NCBIfam" id="TIGR00194">
    <property type="entry name" value="uvrC"/>
    <property type="match status" value="1"/>
</dbReference>
<dbReference type="PANTHER" id="PTHR30562:SF1">
    <property type="entry name" value="UVRABC SYSTEM PROTEIN C"/>
    <property type="match status" value="1"/>
</dbReference>
<dbReference type="PANTHER" id="PTHR30562">
    <property type="entry name" value="UVRC/OXIDOREDUCTASE"/>
    <property type="match status" value="1"/>
</dbReference>
<dbReference type="Pfam" id="PF01541">
    <property type="entry name" value="GIY-YIG"/>
    <property type="match status" value="1"/>
</dbReference>
<dbReference type="Pfam" id="PF14520">
    <property type="entry name" value="HHH_5"/>
    <property type="match status" value="1"/>
</dbReference>
<dbReference type="Pfam" id="PF02151">
    <property type="entry name" value="UVR"/>
    <property type="match status" value="1"/>
</dbReference>
<dbReference type="Pfam" id="PF22920">
    <property type="entry name" value="UvrC_RNaseH"/>
    <property type="match status" value="1"/>
</dbReference>
<dbReference type="Pfam" id="PF08459">
    <property type="entry name" value="UvrC_RNaseH_dom"/>
    <property type="match status" value="1"/>
</dbReference>
<dbReference type="SMART" id="SM00465">
    <property type="entry name" value="GIYc"/>
    <property type="match status" value="1"/>
</dbReference>
<dbReference type="SMART" id="SM00278">
    <property type="entry name" value="HhH1"/>
    <property type="match status" value="2"/>
</dbReference>
<dbReference type="SUPFAM" id="SSF46600">
    <property type="entry name" value="C-terminal UvrC-binding domain of UvrB"/>
    <property type="match status" value="1"/>
</dbReference>
<dbReference type="SUPFAM" id="SSF82771">
    <property type="entry name" value="GIY-YIG endonuclease"/>
    <property type="match status" value="1"/>
</dbReference>
<dbReference type="SUPFAM" id="SSF47781">
    <property type="entry name" value="RuvA domain 2-like"/>
    <property type="match status" value="1"/>
</dbReference>
<dbReference type="PROSITE" id="PS50164">
    <property type="entry name" value="GIY_YIG"/>
    <property type="match status" value="1"/>
</dbReference>
<dbReference type="PROSITE" id="PS50151">
    <property type="entry name" value="UVR"/>
    <property type="match status" value="1"/>
</dbReference>
<dbReference type="PROSITE" id="PS50165">
    <property type="entry name" value="UVRC"/>
    <property type="match status" value="1"/>
</dbReference>
<sequence>MPDPATYRPAPGSIPVEPGVYRFRDQHGRVIYVGKAKSLRSRLTSYFADVASLAPRTRQLVTTAAKVEWTVVGTEVEALQLEYTWIKEFDPRFNVRYRDDKSYPVLAVTLGEEFPRLMVYRGPRRKGVRYFGPYSHAWAIRETLDLLTRVFPARTCSAGVFKRHRQIDRPCLLGYIDKCSAPCIGRVDAAQHRQIVADFCDFLSGKTDRFARALEQQMNAAAEQLDFERAARLRDDLSALKRAMEKQAVVLGDGTDADVVAFADDELEAAVQVFHVRGGRVRGQRGWIVEKPGEPGDSGIQLVEQFLTQFYGDQAALDDAADESANPVPREVLVPCLPSNAEELASWLSGLRGSRVVLRVPRRGDKRALAETVHRNAEDALQQHKLKRASDFNARSAALQSIQDSLGLADAPLRIECVDVSHVQGTDVVGSLVVFEDGLPRKSDYRHFGIREAAGQGRSDDVACIAEVTRRRFLRHLRDQSDPDLLSPERKSRRFAYPPNLYVVDGGAPQVNAASAVIDELGVTDVAVIGLAKRLEEVWVPSEPDPIIMPRNSEGLYLLQRVRDEAHRFAITYHRSKRSTRMTASALDSVPGLGEHRRKALVTHFGSIARLKEATVDEITAVPGIGVATATAVHDALRPDSSGAAR</sequence>
<proteinExistence type="inferred from homology"/>
<feature type="chain" id="PRO_1000077812" description="UvrABC system protein C">
    <location>
        <begin position="1"/>
        <end position="646"/>
    </location>
</feature>
<feature type="domain" description="GIY-YIG" evidence="1">
    <location>
        <begin position="16"/>
        <end position="95"/>
    </location>
</feature>
<feature type="domain" description="UVR" evidence="1">
    <location>
        <begin position="208"/>
        <end position="243"/>
    </location>
</feature>
<comment type="function">
    <text evidence="1">The UvrABC repair system catalyzes the recognition and processing of DNA lesions. UvrC both incises the 5' and 3' sides of the lesion. The N-terminal half is responsible for the 3' incision and the C-terminal half is responsible for the 5' incision.</text>
</comment>
<comment type="subunit">
    <text evidence="1">Interacts with UvrB in an incision complex.</text>
</comment>
<comment type="subcellular location">
    <subcellularLocation>
        <location evidence="1">Cytoplasm</location>
    </subcellularLocation>
</comment>
<comment type="similarity">
    <text evidence="1">Belongs to the UvrC family.</text>
</comment>
<organism>
    <name type="scientific">Mycobacterium tuberculosis (strain ATCC 25177 / H37Ra)</name>
    <dbReference type="NCBI Taxonomy" id="419947"/>
    <lineage>
        <taxon>Bacteria</taxon>
        <taxon>Bacillati</taxon>
        <taxon>Actinomycetota</taxon>
        <taxon>Actinomycetes</taxon>
        <taxon>Mycobacteriales</taxon>
        <taxon>Mycobacteriaceae</taxon>
        <taxon>Mycobacterium</taxon>
        <taxon>Mycobacterium tuberculosis complex</taxon>
    </lineage>
</organism>
<gene>
    <name evidence="1" type="primary">uvrC</name>
    <name type="ordered locus">MRA_1429</name>
</gene>
<name>UVRC_MYCTA</name>
<keyword id="KW-0963">Cytoplasm</keyword>
<keyword id="KW-0227">DNA damage</keyword>
<keyword id="KW-0228">DNA excision</keyword>
<keyword id="KW-0234">DNA repair</keyword>
<keyword id="KW-0267">Excision nuclease</keyword>
<keyword id="KW-1185">Reference proteome</keyword>
<keyword id="KW-0742">SOS response</keyword>
<protein>
    <recommendedName>
        <fullName evidence="1">UvrABC system protein C</fullName>
        <shortName evidence="1">Protein UvrC</shortName>
    </recommendedName>
    <alternativeName>
        <fullName evidence="1">Excinuclease ABC subunit C</fullName>
    </alternativeName>
</protein>
<accession>A5U2C2</accession>
<evidence type="ECO:0000255" key="1">
    <source>
        <dbReference type="HAMAP-Rule" id="MF_00203"/>
    </source>
</evidence>
<reference key="1">
    <citation type="journal article" date="2008" name="PLoS ONE">
        <title>Genetic basis of virulence attenuation revealed by comparative genomic analysis of Mycobacterium tuberculosis strain H37Ra versus H37Rv.</title>
        <authorList>
            <person name="Zheng H."/>
            <person name="Lu L."/>
            <person name="Wang B."/>
            <person name="Pu S."/>
            <person name="Zhang X."/>
            <person name="Zhu G."/>
            <person name="Shi W."/>
            <person name="Zhang L."/>
            <person name="Wang H."/>
            <person name="Wang S."/>
            <person name="Zhao G."/>
            <person name="Zhang Y."/>
        </authorList>
    </citation>
    <scope>NUCLEOTIDE SEQUENCE [LARGE SCALE GENOMIC DNA]</scope>
    <source>
        <strain>ATCC 25177 / H37Ra</strain>
    </source>
</reference>